<organism>
    <name type="scientific">Escherichia coli O157:H7</name>
    <dbReference type="NCBI Taxonomy" id="83334"/>
    <lineage>
        <taxon>Bacteria</taxon>
        <taxon>Pseudomonadati</taxon>
        <taxon>Pseudomonadota</taxon>
        <taxon>Gammaproteobacteria</taxon>
        <taxon>Enterobacterales</taxon>
        <taxon>Enterobacteriaceae</taxon>
        <taxon>Escherichia</taxon>
    </lineage>
</organism>
<evidence type="ECO:0000255" key="1">
    <source>
        <dbReference type="HAMAP-Rule" id="MF_00139"/>
    </source>
</evidence>
<evidence type="ECO:0000255" key="2">
    <source>
        <dbReference type="PROSITE-ProRule" id="PRU01202"/>
    </source>
</evidence>
<protein>
    <recommendedName>
        <fullName evidence="1">Bifunctional purine biosynthesis protein PurH</fullName>
    </recommendedName>
    <domain>
        <recommendedName>
            <fullName evidence="1">Phosphoribosylaminoimidazolecarboxamide formyltransferase</fullName>
            <ecNumber evidence="1">2.1.2.3</ecNumber>
        </recommendedName>
        <alternativeName>
            <fullName evidence="1">AICAR transformylase</fullName>
        </alternativeName>
    </domain>
    <domain>
        <recommendedName>
            <fullName evidence="1">IMP cyclohydrolase</fullName>
            <ecNumber evidence="1">3.5.4.10</ecNumber>
        </recommendedName>
        <alternativeName>
            <fullName evidence="1">ATIC</fullName>
        </alternativeName>
        <alternativeName>
            <fullName evidence="1">IMP synthase</fullName>
        </alternativeName>
        <alternativeName>
            <fullName evidence="1">Inosinicase</fullName>
        </alternativeName>
    </domain>
</protein>
<dbReference type="EC" id="2.1.2.3" evidence="1"/>
<dbReference type="EC" id="3.5.4.10" evidence="1"/>
<dbReference type="EMBL" id="AE005174">
    <property type="protein sequence ID" value="AAG59203.1"/>
    <property type="molecule type" value="Genomic_DNA"/>
</dbReference>
<dbReference type="EMBL" id="BA000007">
    <property type="protein sequence ID" value="BAB38352.1"/>
    <property type="molecule type" value="Genomic_DNA"/>
</dbReference>
<dbReference type="PIR" id="A98245">
    <property type="entry name" value="A98245"/>
</dbReference>
<dbReference type="PIR" id="G86092">
    <property type="entry name" value="G86092"/>
</dbReference>
<dbReference type="RefSeq" id="NP_312956.1">
    <property type="nucleotide sequence ID" value="NC_002695.1"/>
</dbReference>
<dbReference type="RefSeq" id="WP_001187564.1">
    <property type="nucleotide sequence ID" value="NZ_VOAI01000037.1"/>
</dbReference>
<dbReference type="SMR" id="Q8X611"/>
<dbReference type="STRING" id="155864.Z5583"/>
<dbReference type="GeneID" id="75169452"/>
<dbReference type="GeneID" id="914853"/>
<dbReference type="KEGG" id="ece:Z5583"/>
<dbReference type="KEGG" id="ecs:ECs_4929"/>
<dbReference type="PATRIC" id="fig|386585.9.peg.5155"/>
<dbReference type="eggNOG" id="COG0138">
    <property type="taxonomic scope" value="Bacteria"/>
</dbReference>
<dbReference type="HOGENOM" id="CLU_016316_5_2_6"/>
<dbReference type="OMA" id="IKHNNPC"/>
<dbReference type="UniPathway" id="UPA00074">
    <property type="reaction ID" value="UER00133"/>
</dbReference>
<dbReference type="UniPathway" id="UPA00074">
    <property type="reaction ID" value="UER00135"/>
</dbReference>
<dbReference type="Proteomes" id="UP000000558">
    <property type="component" value="Chromosome"/>
</dbReference>
<dbReference type="Proteomes" id="UP000002519">
    <property type="component" value="Chromosome"/>
</dbReference>
<dbReference type="GO" id="GO:0005829">
    <property type="term" value="C:cytosol"/>
    <property type="evidence" value="ECO:0007669"/>
    <property type="project" value="TreeGrafter"/>
</dbReference>
<dbReference type="GO" id="GO:0003937">
    <property type="term" value="F:IMP cyclohydrolase activity"/>
    <property type="evidence" value="ECO:0007669"/>
    <property type="project" value="UniProtKB-UniRule"/>
</dbReference>
<dbReference type="GO" id="GO:0004643">
    <property type="term" value="F:phosphoribosylaminoimidazolecarboxamide formyltransferase activity"/>
    <property type="evidence" value="ECO:0007669"/>
    <property type="project" value="UniProtKB-UniRule"/>
</dbReference>
<dbReference type="GO" id="GO:0006189">
    <property type="term" value="P:'de novo' IMP biosynthetic process"/>
    <property type="evidence" value="ECO:0007669"/>
    <property type="project" value="UniProtKB-UniRule"/>
</dbReference>
<dbReference type="CDD" id="cd01421">
    <property type="entry name" value="IMPCH"/>
    <property type="match status" value="1"/>
</dbReference>
<dbReference type="FunFam" id="3.40.140.20:FF:000001">
    <property type="entry name" value="Bifunctional purine biosynthesis protein PurH"/>
    <property type="match status" value="1"/>
</dbReference>
<dbReference type="FunFam" id="3.40.140.20:FF:000002">
    <property type="entry name" value="Bifunctional purine biosynthesis protein PurH"/>
    <property type="match status" value="1"/>
</dbReference>
<dbReference type="FunFam" id="3.40.50.1380:FF:000001">
    <property type="entry name" value="Bifunctional purine biosynthesis protein PurH"/>
    <property type="match status" value="1"/>
</dbReference>
<dbReference type="Gene3D" id="3.40.140.20">
    <property type="match status" value="2"/>
</dbReference>
<dbReference type="Gene3D" id="3.40.50.1380">
    <property type="entry name" value="Methylglyoxal synthase-like domain"/>
    <property type="match status" value="1"/>
</dbReference>
<dbReference type="HAMAP" id="MF_00139">
    <property type="entry name" value="PurH"/>
    <property type="match status" value="1"/>
</dbReference>
<dbReference type="InterPro" id="IPR024051">
    <property type="entry name" value="AICAR_Tfase_dup_dom_sf"/>
</dbReference>
<dbReference type="InterPro" id="IPR016193">
    <property type="entry name" value="Cytidine_deaminase-like"/>
</dbReference>
<dbReference type="InterPro" id="IPR011607">
    <property type="entry name" value="MGS-like_dom"/>
</dbReference>
<dbReference type="InterPro" id="IPR036914">
    <property type="entry name" value="MGS-like_dom_sf"/>
</dbReference>
<dbReference type="InterPro" id="IPR002695">
    <property type="entry name" value="PurH-like"/>
</dbReference>
<dbReference type="NCBIfam" id="NF002049">
    <property type="entry name" value="PRK00881.1"/>
    <property type="match status" value="1"/>
</dbReference>
<dbReference type="NCBIfam" id="TIGR00355">
    <property type="entry name" value="purH"/>
    <property type="match status" value="1"/>
</dbReference>
<dbReference type="PANTHER" id="PTHR11692:SF0">
    <property type="entry name" value="BIFUNCTIONAL PURINE BIOSYNTHESIS PROTEIN ATIC"/>
    <property type="match status" value="1"/>
</dbReference>
<dbReference type="PANTHER" id="PTHR11692">
    <property type="entry name" value="BIFUNCTIONAL PURINE BIOSYNTHESIS PROTEIN PURH"/>
    <property type="match status" value="1"/>
</dbReference>
<dbReference type="Pfam" id="PF01808">
    <property type="entry name" value="AICARFT_IMPCHas"/>
    <property type="match status" value="1"/>
</dbReference>
<dbReference type="Pfam" id="PF02142">
    <property type="entry name" value="MGS"/>
    <property type="match status" value="1"/>
</dbReference>
<dbReference type="PIRSF" id="PIRSF000414">
    <property type="entry name" value="AICARFT_IMPCHas"/>
    <property type="match status" value="1"/>
</dbReference>
<dbReference type="SMART" id="SM00798">
    <property type="entry name" value="AICARFT_IMPCHas"/>
    <property type="match status" value="1"/>
</dbReference>
<dbReference type="SMART" id="SM00851">
    <property type="entry name" value="MGS"/>
    <property type="match status" value="1"/>
</dbReference>
<dbReference type="SUPFAM" id="SSF53927">
    <property type="entry name" value="Cytidine deaminase-like"/>
    <property type="match status" value="1"/>
</dbReference>
<dbReference type="SUPFAM" id="SSF52335">
    <property type="entry name" value="Methylglyoxal synthase-like"/>
    <property type="match status" value="1"/>
</dbReference>
<dbReference type="PROSITE" id="PS51855">
    <property type="entry name" value="MGS"/>
    <property type="match status" value="1"/>
</dbReference>
<name>PUR9_ECO57</name>
<comment type="catalytic activity">
    <reaction evidence="1">
        <text>(6R)-10-formyltetrahydrofolate + 5-amino-1-(5-phospho-beta-D-ribosyl)imidazole-4-carboxamide = 5-formamido-1-(5-phospho-D-ribosyl)imidazole-4-carboxamide + (6S)-5,6,7,8-tetrahydrofolate</text>
        <dbReference type="Rhea" id="RHEA:22192"/>
        <dbReference type="ChEBI" id="CHEBI:57453"/>
        <dbReference type="ChEBI" id="CHEBI:58467"/>
        <dbReference type="ChEBI" id="CHEBI:58475"/>
        <dbReference type="ChEBI" id="CHEBI:195366"/>
        <dbReference type="EC" id="2.1.2.3"/>
    </reaction>
</comment>
<comment type="catalytic activity">
    <reaction evidence="1">
        <text>IMP + H2O = 5-formamido-1-(5-phospho-D-ribosyl)imidazole-4-carboxamide</text>
        <dbReference type="Rhea" id="RHEA:18445"/>
        <dbReference type="ChEBI" id="CHEBI:15377"/>
        <dbReference type="ChEBI" id="CHEBI:58053"/>
        <dbReference type="ChEBI" id="CHEBI:58467"/>
        <dbReference type="EC" id="3.5.4.10"/>
    </reaction>
</comment>
<comment type="pathway">
    <text evidence="1">Purine metabolism; IMP biosynthesis via de novo pathway; 5-formamido-1-(5-phospho-D-ribosyl)imidazole-4-carboxamide from 5-amino-1-(5-phospho-D-ribosyl)imidazole-4-carboxamide (10-formyl THF route): step 1/1.</text>
</comment>
<comment type="pathway">
    <text evidence="1">Purine metabolism; IMP biosynthesis via de novo pathway; IMP from 5-formamido-1-(5-phospho-D-ribosyl)imidazole-4-carboxamide: step 1/1.</text>
</comment>
<comment type="domain">
    <text evidence="1">The IMP cyclohydrolase activity resides in the N-terminal region.</text>
</comment>
<comment type="similarity">
    <text evidence="1">Belongs to the PurH family.</text>
</comment>
<keyword id="KW-0007">Acetylation</keyword>
<keyword id="KW-0378">Hydrolase</keyword>
<keyword id="KW-0511">Multifunctional enzyme</keyword>
<keyword id="KW-0658">Purine biosynthesis</keyword>
<keyword id="KW-1185">Reference proteome</keyword>
<keyword id="KW-0808">Transferase</keyword>
<sequence length="529" mass="57358">MQQRRPVRRALLSVSDKAGIVEFAQALSARGVELLSTGGTARLLAEKGLPVTEVSDYTGFPEMMDGRVKTLHPKVHGGILGRRGQDDAIMEEHQIQPIDMVVVNLYPFAQTVAREGCSLEDAVENIDIGGPTMVRSAAKNHKDVAIVVKSSDYDAIIKEMDDNEGSLTLATRFDLAIKAFEHTAAYDSMIANYFGSMVPAYHGESKEAAGRFPRTLNLNFIKKQDMRYGENSHQQAAFYIEENVKEASVATATQVQGKALSYNNIADTDAALECVKEFAEPACVIVKHANPCGVAIGNSILDAYDRAYKTDPTSAFGGIIAFNRELDAETAQAIISRQFVEVIIAPSASEEALKITAAKQNVRVLTCGQWGERVPGLDFKRVNGGLLVQDRDLGMVGAEELRVVTKRQPTEQELRDALFCWKVAKFVKSNAIVYAKNNMTIGIGAGQMSRVYSAKIAGIKAADEGLEVKGSSMASDAFFPFRDGIDAAAAAGVTCVIQPGGSIRDDEVIAAADEHGIAMLFTDMRHFRH</sequence>
<accession>Q8X611</accession>
<proteinExistence type="inferred from homology"/>
<gene>
    <name evidence="1" type="primary">purH</name>
    <name type="ordered locus">Z5583</name>
    <name type="ordered locus">ECs4929</name>
</gene>
<feature type="chain" id="PRO_0000192093" description="Bifunctional purine biosynthesis protein PurH">
    <location>
        <begin position="1"/>
        <end position="529"/>
    </location>
</feature>
<feature type="domain" description="MGS-like" evidence="2">
    <location>
        <begin position="1"/>
        <end position="148"/>
    </location>
</feature>
<feature type="modified residue" description="N6-acetyllysine" evidence="1">
    <location>
        <position position="287"/>
    </location>
</feature>
<reference key="1">
    <citation type="journal article" date="2001" name="Nature">
        <title>Genome sequence of enterohaemorrhagic Escherichia coli O157:H7.</title>
        <authorList>
            <person name="Perna N.T."/>
            <person name="Plunkett G. III"/>
            <person name="Burland V."/>
            <person name="Mau B."/>
            <person name="Glasner J.D."/>
            <person name="Rose D.J."/>
            <person name="Mayhew G.F."/>
            <person name="Evans P.S."/>
            <person name="Gregor J."/>
            <person name="Kirkpatrick H.A."/>
            <person name="Posfai G."/>
            <person name="Hackett J."/>
            <person name="Klink S."/>
            <person name="Boutin A."/>
            <person name="Shao Y."/>
            <person name="Miller L."/>
            <person name="Grotbeck E.J."/>
            <person name="Davis N.W."/>
            <person name="Lim A."/>
            <person name="Dimalanta E.T."/>
            <person name="Potamousis K."/>
            <person name="Apodaca J."/>
            <person name="Anantharaman T.S."/>
            <person name="Lin J."/>
            <person name="Yen G."/>
            <person name="Schwartz D.C."/>
            <person name="Welch R.A."/>
            <person name="Blattner F.R."/>
        </authorList>
    </citation>
    <scope>NUCLEOTIDE SEQUENCE [LARGE SCALE GENOMIC DNA]</scope>
    <source>
        <strain>O157:H7 / EDL933 / ATCC 700927 / EHEC</strain>
    </source>
</reference>
<reference key="2">
    <citation type="journal article" date="2001" name="DNA Res.">
        <title>Complete genome sequence of enterohemorrhagic Escherichia coli O157:H7 and genomic comparison with a laboratory strain K-12.</title>
        <authorList>
            <person name="Hayashi T."/>
            <person name="Makino K."/>
            <person name="Ohnishi M."/>
            <person name="Kurokawa K."/>
            <person name="Ishii K."/>
            <person name="Yokoyama K."/>
            <person name="Han C.-G."/>
            <person name="Ohtsubo E."/>
            <person name="Nakayama K."/>
            <person name="Murata T."/>
            <person name="Tanaka M."/>
            <person name="Tobe T."/>
            <person name="Iida T."/>
            <person name="Takami H."/>
            <person name="Honda T."/>
            <person name="Sasakawa C."/>
            <person name="Ogasawara N."/>
            <person name="Yasunaga T."/>
            <person name="Kuhara S."/>
            <person name="Shiba T."/>
            <person name="Hattori M."/>
            <person name="Shinagawa H."/>
        </authorList>
    </citation>
    <scope>NUCLEOTIDE SEQUENCE [LARGE SCALE GENOMIC DNA]</scope>
    <source>
        <strain>O157:H7 / Sakai / RIMD 0509952 / EHEC</strain>
    </source>
</reference>